<proteinExistence type="evidence at protein level"/>
<sequence length="51" mass="5698">AANQHLCGSHLVEALYLVCGERGFFYSPKAGIVEQCCHNTCSLYQLENYCN</sequence>
<evidence type="ECO:0000250" key="1"/>
<evidence type="ECO:0000305" key="2"/>
<organism>
    <name type="scientific">Trachemys scripta</name>
    <name type="common">Red-eared slider turtle</name>
    <name type="synonym">Pseudemys scripta</name>
    <dbReference type="NCBI Taxonomy" id="34903"/>
    <lineage>
        <taxon>Eukaryota</taxon>
        <taxon>Metazoa</taxon>
        <taxon>Chordata</taxon>
        <taxon>Craniata</taxon>
        <taxon>Vertebrata</taxon>
        <taxon>Euteleostomi</taxon>
        <taxon>Archelosauria</taxon>
        <taxon>Testudinata</taxon>
        <taxon>Testudines</taxon>
        <taxon>Cryptodira</taxon>
        <taxon>Durocryptodira</taxon>
        <taxon>Testudinoidea</taxon>
        <taxon>Emydidae</taxon>
        <taxon>Trachemys</taxon>
    </lineage>
</organism>
<accession>P69048</accession>
<accession>P31887</accession>
<feature type="peptide" id="PRO_0000015924" description="Insulin B chain">
    <location>
        <begin position="1"/>
        <end position="30"/>
    </location>
</feature>
<feature type="peptide" id="PRO_0000015925" description="Insulin A chain">
    <location>
        <begin position="31"/>
        <end position="51"/>
    </location>
</feature>
<feature type="disulfide bond" description="Interchain (between B and A chains)" evidence="1">
    <location>
        <begin position="7"/>
        <end position="37"/>
    </location>
</feature>
<feature type="disulfide bond" description="Interchain (between B and A chains)" evidence="1">
    <location>
        <begin position="19"/>
        <end position="50"/>
    </location>
</feature>
<feature type="disulfide bond" evidence="1">
    <location>
        <begin position="36"/>
        <end position="41"/>
    </location>
</feature>
<feature type="non-consecutive residues" evidence="2">
    <location>
        <begin position="30"/>
        <end position="31"/>
    </location>
</feature>
<gene>
    <name type="primary">INS</name>
</gene>
<keyword id="KW-0119">Carbohydrate metabolism</keyword>
<keyword id="KW-0903">Direct protein sequencing</keyword>
<keyword id="KW-1015">Disulfide bond</keyword>
<keyword id="KW-0313">Glucose metabolism</keyword>
<keyword id="KW-0372">Hormone</keyword>
<keyword id="KW-0964">Secreted</keyword>
<dbReference type="PIR" id="A60414">
    <property type="entry name" value="A60414"/>
</dbReference>
<dbReference type="SMR" id="P69048"/>
<dbReference type="GO" id="GO:0005615">
    <property type="term" value="C:extracellular space"/>
    <property type="evidence" value="ECO:0007669"/>
    <property type="project" value="TreeGrafter"/>
</dbReference>
<dbReference type="GO" id="GO:0005179">
    <property type="term" value="F:hormone activity"/>
    <property type="evidence" value="ECO:0007669"/>
    <property type="project" value="UniProtKB-KW"/>
</dbReference>
<dbReference type="GO" id="GO:0006006">
    <property type="term" value="P:glucose metabolic process"/>
    <property type="evidence" value="ECO:0007669"/>
    <property type="project" value="UniProtKB-KW"/>
</dbReference>
<dbReference type="CDD" id="cd04367">
    <property type="entry name" value="IlGF_insulin_like"/>
    <property type="match status" value="1"/>
</dbReference>
<dbReference type="Gene3D" id="1.10.100.10">
    <property type="entry name" value="Insulin-like"/>
    <property type="match status" value="1"/>
</dbReference>
<dbReference type="InterPro" id="IPR004825">
    <property type="entry name" value="Insulin"/>
</dbReference>
<dbReference type="InterPro" id="IPR016179">
    <property type="entry name" value="Insulin-like"/>
</dbReference>
<dbReference type="InterPro" id="IPR036438">
    <property type="entry name" value="Insulin-like_sf"/>
</dbReference>
<dbReference type="InterPro" id="IPR022353">
    <property type="entry name" value="Insulin_CS"/>
</dbReference>
<dbReference type="InterPro" id="IPR022352">
    <property type="entry name" value="Insulin_family"/>
</dbReference>
<dbReference type="PANTHER" id="PTHR11454:SF9">
    <property type="entry name" value="INSULIN"/>
    <property type="match status" value="1"/>
</dbReference>
<dbReference type="PANTHER" id="PTHR11454">
    <property type="entry name" value="INSULIN/INSULIN GROWTH FACTOR"/>
    <property type="match status" value="1"/>
</dbReference>
<dbReference type="Pfam" id="PF00049">
    <property type="entry name" value="Insulin"/>
    <property type="match status" value="1"/>
</dbReference>
<dbReference type="PRINTS" id="PR00277">
    <property type="entry name" value="INSULIN"/>
</dbReference>
<dbReference type="PRINTS" id="PR00276">
    <property type="entry name" value="INSULINFAMLY"/>
</dbReference>
<dbReference type="SMART" id="SM00078">
    <property type="entry name" value="IlGF"/>
    <property type="match status" value="1"/>
</dbReference>
<dbReference type="SUPFAM" id="SSF56994">
    <property type="entry name" value="Insulin-like"/>
    <property type="match status" value="1"/>
</dbReference>
<dbReference type="PROSITE" id="PS00262">
    <property type="entry name" value="INSULIN"/>
    <property type="match status" value="1"/>
</dbReference>
<comment type="function">
    <text>Insulin decreases blood glucose concentration. It increases cell permeability to monosaccharides, amino acids and fatty acids. It accelerates glycolysis, the pentose phosphate cycle, and glycogen synthesis in liver.</text>
</comment>
<comment type="subunit">
    <text>Heterodimer of a B chain and an A chain linked by two disulfide bonds.</text>
</comment>
<comment type="subcellular location">
    <subcellularLocation>
        <location>Secreted</location>
    </subcellularLocation>
</comment>
<comment type="similarity">
    <text evidence="2">Belongs to the insulin family.</text>
</comment>
<name>INS_TRASC</name>
<protein>
    <recommendedName>
        <fullName>Insulin</fullName>
    </recommendedName>
    <component>
        <recommendedName>
            <fullName>Insulin B chain</fullName>
        </recommendedName>
    </component>
    <component>
        <recommendedName>
            <fullName>Insulin A chain</fullName>
        </recommendedName>
    </component>
</protein>
<reference key="1">
    <citation type="journal article" date="1990" name="Peptides">
        <title>Isolation and structural characterization of insulin, glucagon and somatostatin from the turtle, Pseudemys scripta.</title>
        <authorList>
            <person name="Conlon J.M."/>
            <person name="Hicks J.W."/>
        </authorList>
    </citation>
    <scope>PROTEIN SEQUENCE</scope>
</reference>